<protein>
    <recommendedName>
        <fullName evidence="1">Phosphate acyltransferase</fullName>
        <ecNumber evidence="1">2.3.1.274</ecNumber>
    </recommendedName>
    <alternativeName>
        <fullName evidence="1">Acyl-ACP phosphotransacylase</fullName>
    </alternativeName>
    <alternativeName>
        <fullName evidence="1">Acyl-[acyl-carrier-protein]--phosphate acyltransferase</fullName>
    </alternativeName>
    <alternativeName>
        <fullName evidence="1">Phosphate-acyl-ACP acyltransferase</fullName>
    </alternativeName>
</protein>
<reference key="1">
    <citation type="journal article" date="2010" name="PLoS Genet.">
        <title>Genome sequence of the plant growth promoting endophytic bacterium Enterobacter sp. 638.</title>
        <authorList>
            <person name="Taghavi S."/>
            <person name="van der Lelie D."/>
            <person name="Hoffman A."/>
            <person name="Zhang Y.B."/>
            <person name="Walla M.D."/>
            <person name="Vangronsveld J."/>
            <person name="Newman L."/>
            <person name="Monchy S."/>
        </authorList>
    </citation>
    <scope>NUCLEOTIDE SEQUENCE [LARGE SCALE GENOMIC DNA]</scope>
    <source>
        <strain>638</strain>
    </source>
</reference>
<organism>
    <name type="scientific">Enterobacter sp. (strain 638)</name>
    <dbReference type="NCBI Taxonomy" id="399742"/>
    <lineage>
        <taxon>Bacteria</taxon>
        <taxon>Pseudomonadati</taxon>
        <taxon>Pseudomonadota</taxon>
        <taxon>Gammaproteobacteria</taxon>
        <taxon>Enterobacterales</taxon>
        <taxon>Enterobacteriaceae</taxon>
        <taxon>Enterobacter</taxon>
    </lineage>
</organism>
<gene>
    <name evidence="1" type="primary">plsX</name>
    <name type="ordered locus">Ent638_1605</name>
</gene>
<keyword id="KW-0963">Cytoplasm</keyword>
<keyword id="KW-0444">Lipid biosynthesis</keyword>
<keyword id="KW-0443">Lipid metabolism</keyword>
<keyword id="KW-0594">Phospholipid biosynthesis</keyword>
<keyword id="KW-1208">Phospholipid metabolism</keyword>
<keyword id="KW-0808">Transferase</keyword>
<feature type="chain" id="PRO_0000329226" description="Phosphate acyltransferase">
    <location>
        <begin position="1"/>
        <end position="344"/>
    </location>
</feature>
<sequence length="344" mass="36969">MTRLTLALDVMGGDFGPSVTVPAALQALNSNSQLTLLLVGNPDTITPLLAKADFEQRSRLQIIPAQSVIASDARPSHAIRNSRGTSMRIALELVKEGRAEACVSAGNTGALMGLAKLMLKPIQGIERPALVTVLPHQQKGKTVVLDLGANVDCDSTMLAQFAIMGSVLAEEVVGISNPRVALLNIGEEETKGLDSIREAAELLKSAPSINYIGYLEANELLTGKTDVLVCDGFTGNVTLKTMEGVVRMFLSLLKSQGEGKKTAWWLILLKRWLQKSLTRRFSHLNPDQYNGACLLGLRGTVIKSHGAANQRAFTVAIEQAVQAVQRQVPQRIAARLESVLAKSD</sequence>
<proteinExistence type="inferred from homology"/>
<comment type="function">
    <text evidence="1">Catalyzes the reversible formation of acyl-phosphate (acyl-PO(4)) from acyl-[acyl-carrier-protein] (acyl-ACP). This enzyme utilizes acyl-ACP as fatty acyl donor, but not acyl-CoA.</text>
</comment>
<comment type="catalytic activity">
    <reaction evidence="1">
        <text>a fatty acyl-[ACP] + phosphate = an acyl phosphate + holo-[ACP]</text>
        <dbReference type="Rhea" id="RHEA:42292"/>
        <dbReference type="Rhea" id="RHEA-COMP:9685"/>
        <dbReference type="Rhea" id="RHEA-COMP:14125"/>
        <dbReference type="ChEBI" id="CHEBI:43474"/>
        <dbReference type="ChEBI" id="CHEBI:59918"/>
        <dbReference type="ChEBI" id="CHEBI:64479"/>
        <dbReference type="ChEBI" id="CHEBI:138651"/>
        <dbReference type="EC" id="2.3.1.274"/>
    </reaction>
</comment>
<comment type="pathway">
    <text evidence="1">Lipid metabolism; phospholipid metabolism.</text>
</comment>
<comment type="subunit">
    <text evidence="1">Homodimer. Probably interacts with PlsY.</text>
</comment>
<comment type="subcellular location">
    <subcellularLocation>
        <location evidence="1">Cytoplasm</location>
    </subcellularLocation>
    <text evidence="1">Associated with the membrane possibly through PlsY.</text>
</comment>
<comment type="similarity">
    <text evidence="1">Belongs to the PlsX family.</text>
</comment>
<comment type="sequence caution" evidence="2">
    <conflict type="erroneous initiation">
        <sequence resource="EMBL-CDS" id="ABP60284"/>
    </conflict>
</comment>
<accession>A4W9A4</accession>
<dbReference type="EC" id="2.3.1.274" evidence="1"/>
<dbReference type="EMBL" id="CP000653">
    <property type="protein sequence ID" value="ABP60284.1"/>
    <property type="status" value="ALT_INIT"/>
    <property type="molecule type" value="Genomic_DNA"/>
</dbReference>
<dbReference type="RefSeq" id="WP_190275375.1">
    <property type="nucleotide sequence ID" value="NC_009436.1"/>
</dbReference>
<dbReference type="SMR" id="A4W9A4"/>
<dbReference type="STRING" id="399742.Ent638_1605"/>
<dbReference type="KEGG" id="ent:Ent638_1605"/>
<dbReference type="eggNOG" id="COG0416">
    <property type="taxonomic scope" value="Bacteria"/>
</dbReference>
<dbReference type="HOGENOM" id="CLU_039379_1_0_6"/>
<dbReference type="UniPathway" id="UPA00085"/>
<dbReference type="Proteomes" id="UP000000230">
    <property type="component" value="Chromosome"/>
</dbReference>
<dbReference type="GO" id="GO:0005737">
    <property type="term" value="C:cytoplasm"/>
    <property type="evidence" value="ECO:0007669"/>
    <property type="project" value="UniProtKB-SubCell"/>
</dbReference>
<dbReference type="GO" id="GO:0043811">
    <property type="term" value="F:phosphate:acyl-[acyl carrier protein] acyltransferase activity"/>
    <property type="evidence" value="ECO:0007669"/>
    <property type="project" value="UniProtKB-UniRule"/>
</dbReference>
<dbReference type="GO" id="GO:0006633">
    <property type="term" value="P:fatty acid biosynthetic process"/>
    <property type="evidence" value="ECO:0007669"/>
    <property type="project" value="UniProtKB-UniRule"/>
</dbReference>
<dbReference type="GO" id="GO:0008654">
    <property type="term" value="P:phospholipid biosynthetic process"/>
    <property type="evidence" value="ECO:0007669"/>
    <property type="project" value="UniProtKB-KW"/>
</dbReference>
<dbReference type="FunFam" id="3.40.718.10:FF:000008">
    <property type="entry name" value="Phosphate acyltransferase"/>
    <property type="match status" value="1"/>
</dbReference>
<dbReference type="Gene3D" id="3.40.718.10">
    <property type="entry name" value="Isopropylmalate Dehydrogenase"/>
    <property type="match status" value="1"/>
</dbReference>
<dbReference type="HAMAP" id="MF_00019">
    <property type="entry name" value="PlsX"/>
    <property type="match status" value="1"/>
</dbReference>
<dbReference type="InterPro" id="IPR003664">
    <property type="entry name" value="FA_synthesis"/>
</dbReference>
<dbReference type="InterPro" id="IPR012281">
    <property type="entry name" value="Phospholipid_synth_PlsX-like"/>
</dbReference>
<dbReference type="NCBIfam" id="TIGR00182">
    <property type="entry name" value="plsX"/>
    <property type="match status" value="1"/>
</dbReference>
<dbReference type="PANTHER" id="PTHR30100">
    <property type="entry name" value="FATTY ACID/PHOSPHOLIPID SYNTHESIS PROTEIN PLSX"/>
    <property type="match status" value="1"/>
</dbReference>
<dbReference type="PANTHER" id="PTHR30100:SF1">
    <property type="entry name" value="PHOSPHATE ACYLTRANSFERASE"/>
    <property type="match status" value="1"/>
</dbReference>
<dbReference type="Pfam" id="PF02504">
    <property type="entry name" value="FA_synthesis"/>
    <property type="match status" value="1"/>
</dbReference>
<dbReference type="PIRSF" id="PIRSF002465">
    <property type="entry name" value="Phsphlp_syn_PlsX"/>
    <property type="match status" value="1"/>
</dbReference>
<dbReference type="SUPFAM" id="SSF53659">
    <property type="entry name" value="Isocitrate/Isopropylmalate dehydrogenase-like"/>
    <property type="match status" value="1"/>
</dbReference>
<evidence type="ECO:0000255" key="1">
    <source>
        <dbReference type="HAMAP-Rule" id="MF_00019"/>
    </source>
</evidence>
<evidence type="ECO:0000305" key="2"/>
<name>PLSX_ENT38</name>